<protein>
    <recommendedName>
        <fullName>Kininogen-1</fullName>
    </recommendedName>
    <alternativeName>
        <fullName>Kininogen I</fullName>
    </alternativeName>
    <alternativeName>
        <fullName>Thiol proteinase inhibitor</fullName>
    </alternativeName>
    <component>
        <recommendedName>
            <fullName>Kininogen-1 heavy chain</fullName>
        </recommendedName>
    </component>
    <component>
        <recommendedName>
            <fullName>Bradykinin</fullName>
        </recommendedName>
        <alternativeName>
            <fullName>Kallidin I</fullName>
        </alternativeName>
    </component>
    <component>
        <recommendedName>
            <fullName>Lysyl-bradykinin</fullName>
        </recommendedName>
        <alternativeName>
            <fullName>Kallidin II</fullName>
        </alternativeName>
    </component>
    <component>
        <recommendedName>
            <fullName>Kininogen-1 light chain</fullName>
        </recommendedName>
    </component>
</protein>
<accession>P01044</accession>
<accession>P01046</accession>
<accession>Q2KJ62</accession>
<keyword id="KW-0025">Alternative splicing</keyword>
<keyword id="KW-0094">Blood coagulation</keyword>
<keyword id="KW-0903">Direct protein sequencing</keyword>
<keyword id="KW-1015">Disulfide bond</keyword>
<keyword id="KW-0325">Glycoprotein</keyword>
<keyword id="KW-0356">Hemostasis</keyword>
<keyword id="KW-0395">Inflammatory response</keyword>
<keyword id="KW-0597">Phosphoprotein</keyword>
<keyword id="KW-0646">Protease inhibitor</keyword>
<keyword id="KW-1185">Reference proteome</keyword>
<keyword id="KW-0677">Repeat</keyword>
<keyword id="KW-0964">Secreted</keyword>
<keyword id="KW-0732">Signal</keyword>
<keyword id="KW-0789">Thiol protease inhibitor</keyword>
<keyword id="KW-0838">Vasoactive</keyword>
<keyword id="KW-0840">Vasodilator</keyword>
<name>KNG1_BOVIN</name>
<organism>
    <name type="scientific">Bos taurus</name>
    <name type="common">Bovine</name>
    <dbReference type="NCBI Taxonomy" id="9913"/>
    <lineage>
        <taxon>Eukaryota</taxon>
        <taxon>Metazoa</taxon>
        <taxon>Chordata</taxon>
        <taxon>Craniata</taxon>
        <taxon>Vertebrata</taxon>
        <taxon>Euteleostomi</taxon>
        <taxon>Mammalia</taxon>
        <taxon>Eutheria</taxon>
        <taxon>Laurasiatheria</taxon>
        <taxon>Artiodactyla</taxon>
        <taxon>Ruminantia</taxon>
        <taxon>Pecora</taxon>
        <taxon>Bovidae</taxon>
        <taxon>Bovinae</taxon>
        <taxon>Bos</taxon>
    </lineage>
</organism>
<evidence type="ECO:0000250" key="1">
    <source>
        <dbReference type="UniProtKB" id="P01042"/>
    </source>
</evidence>
<evidence type="ECO:0000255" key="2"/>
<evidence type="ECO:0000255" key="3">
    <source>
        <dbReference type="PROSITE-ProRule" id="PRU00979"/>
    </source>
</evidence>
<evidence type="ECO:0000256" key="4">
    <source>
        <dbReference type="SAM" id="MobiDB-lite"/>
    </source>
</evidence>
<evidence type="ECO:0000269" key="5">
    <source>
    </source>
</evidence>
<evidence type="ECO:0000269" key="6">
    <source>
    </source>
</evidence>
<evidence type="ECO:0000303" key="7">
    <source>
    </source>
</evidence>
<evidence type="ECO:0000305" key="8"/>
<evidence type="ECO:0000305" key="9">
    <source>
    </source>
</evidence>
<feature type="signal peptide" evidence="9">
    <location>
        <begin position="1"/>
        <end position="18"/>
    </location>
</feature>
<feature type="chain" id="PRO_0000006675" description="Kininogen-1">
    <location>
        <begin position="19"/>
        <end position="621"/>
    </location>
</feature>
<feature type="chain" id="PRO_0000006676" description="Kininogen-1 heavy chain">
    <location>
        <begin position="19"/>
        <end position="378"/>
    </location>
</feature>
<feature type="peptide" id="PRO_0000006677" description="Lysyl-bradykinin">
    <location>
        <begin position="379"/>
        <end position="388"/>
    </location>
</feature>
<feature type="peptide" id="PRO_0000006678" description="Bradykinin">
    <location>
        <begin position="380"/>
        <end position="388"/>
    </location>
</feature>
<feature type="chain" id="PRO_0000006679" description="Kininogen-1 light chain">
    <location>
        <begin position="389"/>
        <end position="621"/>
    </location>
</feature>
<feature type="domain" description="Cystatin kininogen-type 1" evidence="3">
    <location>
        <begin position="27"/>
        <end position="131"/>
    </location>
</feature>
<feature type="domain" description="Cystatin kininogen-type 2" evidence="3">
    <location>
        <begin position="150"/>
        <end position="253"/>
    </location>
</feature>
<feature type="domain" description="Cystatin kininogen-type 3" evidence="3">
    <location>
        <begin position="272"/>
        <end position="375"/>
    </location>
</feature>
<feature type="region of interest" description="Disordered" evidence="4">
    <location>
        <begin position="396"/>
        <end position="497"/>
    </location>
</feature>
<feature type="compositionally biased region" description="Basic residues" evidence="4">
    <location>
        <begin position="444"/>
        <end position="492"/>
    </location>
</feature>
<feature type="site" description="Cleavage; by kallikrein">
    <location>
        <begin position="378"/>
        <end position="379"/>
    </location>
</feature>
<feature type="site" description="Cleavage; by ACE" evidence="1">
    <location>
        <begin position="386"/>
        <end position="387"/>
    </location>
</feature>
<feature type="site" description="Cleavage; by kallikrein">
    <location>
        <begin position="388"/>
        <end position="389"/>
    </location>
</feature>
<feature type="site" description="Cleavage; by kallikrein">
    <location>
        <begin position="498"/>
        <end position="499"/>
    </location>
</feature>
<feature type="modified residue" description="Phosphoserine" evidence="1">
    <location>
        <position position="331"/>
    </location>
</feature>
<feature type="glycosylation site" description="N-linked (GlcNAc...) asparagine" evidence="2">
    <location>
        <position position="47"/>
    </location>
</feature>
<feature type="glycosylation site" description="N-linked (GlcNAc...) asparagine" evidence="6">
    <location>
        <position position="87"/>
    </location>
</feature>
<feature type="glycosylation site" description="O-linked (GalNAc...) threonine; partial" evidence="5 6">
    <location>
        <position position="136"/>
    </location>
</feature>
<feature type="glycosylation site" description="N-linked (GlcNAc...) asparagine" evidence="6">
    <location>
        <position position="168"/>
    </location>
</feature>
<feature type="glycosylation site" description="N-linked (GlcNAc...) asparagine" evidence="6">
    <location>
        <position position="169"/>
    </location>
</feature>
<feature type="glycosylation site" description="N-linked (GlcNAc...) asparagine; partial" evidence="6">
    <location>
        <position position="197"/>
    </location>
</feature>
<feature type="glycosylation site" description="N-linked (GlcNAc...) asparagine" evidence="6">
    <location>
        <position position="204"/>
    </location>
</feature>
<feature type="glycosylation site" description="O-linked (GalNAc...) serine">
    <location>
        <position position="398"/>
    </location>
</feature>
<feature type="glycosylation site" description="O-linked (GalNAc...) threonine">
    <location>
        <position position="399"/>
    </location>
</feature>
<feature type="glycosylation site" description="O-linked (GalNAc...) threonine">
    <location>
        <position position="400"/>
    </location>
</feature>
<feature type="glycosylation site" description="O-linked (GalNAc...) serine">
    <location>
        <position position="406"/>
    </location>
</feature>
<feature type="glycosylation site" description="O-linked (GalNAc...) serine">
    <location>
        <position position="512"/>
    </location>
</feature>
<feature type="glycosylation site" description="O-linked (GalNAc...) threonine">
    <location>
        <position position="520"/>
    </location>
</feature>
<feature type="glycosylation site" description="O-linked (GalNAc...) threonine">
    <location>
        <position position="524"/>
    </location>
</feature>
<feature type="glycosylation site" description="O-linked (GalNAc...) threonine">
    <location>
        <position position="536"/>
    </location>
</feature>
<feature type="glycosylation site" description="O-linked (GalNAc...) threonine">
    <location>
        <position position="548"/>
    </location>
</feature>
<feature type="glycosylation site" description="O-linked (GalNAc...) threonine">
    <location>
        <position position="553"/>
    </location>
</feature>
<feature type="glycosylation site" description="O-linked (GalNAc...) threonine">
    <location>
        <position position="570"/>
    </location>
</feature>
<feature type="glycosylation site" description="O-linked (GalNAc...) serine" evidence="5">
    <location>
        <position position="581"/>
    </location>
</feature>
<feature type="disulfide bond" description="Interchain (between heavy and light chains)">
    <location>
        <begin position="27"/>
        <end position="591"/>
    </location>
</feature>
<feature type="disulfide bond" evidence="3 6">
    <location>
        <begin position="82"/>
        <end position="93"/>
    </location>
</feature>
<feature type="disulfide bond" evidence="3 6">
    <location>
        <begin position="106"/>
        <end position="125"/>
    </location>
</feature>
<feature type="disulfide bond" evidence="3 6">
    <location>
        <begin position="141"/>
        <end position="144"/>
    </location>
</feature>
<feature type="disulfide bond" evidence="3 6">
    <location>
        <begin position="205"/>
        <end position="217"/>
    </location>
</feature>
<feature type="disulfide bond" evidence="3 6">
    <location>
        <begin position="228"/>
        <end position="247"/>
    </location>
</feature>
<feature type="disulfide bond" evidence="3 6">
    <location>
        <begin position="263"/>
        <end position="266"/>
    </location>
</feature>
<feature type="disulfide bond" evidence="3 6">
    <location>
        <begin position="327"/>
        <end position="339"/>
    </location>
</feature>
<feature type="disulfide bond" evidence="3 6">
    <location>
        <begin position="350"/>
        <end position="369"/>
    </location>
</feature>
<feature type="splice variant" id="VSP_013562" description="In isoform LMW." evidence="7">
    <original>VSLPHSAMSPVQDEERDSGKEQGPTHGHGWDHGKQI</original>
    <variation>THVKSCEYKGRPQEAGAEPAPQGEVSLPAESPQLAR</variation>
    <location>
        <begin position="401"/>
        <end position="436"/>
    </location>
</feature>
<feature type="splice variant" id="VSP_013563" description="In isoform LMW." evidence="7">
    <location>
        <begin position="437"/>
        <end position="621"/>
    </location>
</feature>
<feature type="sequence conflict" description="In Ref. 2; CAA23709." evidence="8" ref="2">
    <original>A</original>
    <variation>T</variation>
    <location>
        <position position="295"/>
    </location>
</feature>
<feature type="sequence conflict" description="In Ref. 3; AAI05500." evidence="8" ref="3">
    <original>P</original>
    <variation>S</variation>
    <location>
        <position position="371"/>
    </location>
</feature>
<feature type="sequence conflict" description="In Ref. 3; AAI05500." evidence="8" ref="3">
    <original>L</original>
    <variation>V</variation>
    <location>
        <position position="403"/>
    </location>
</feature>
<feature type="sequence conflict" description="In Ref. 3; AAI05500." evidence="8" ref="3">
    <original>G</original>
    <variation>R</variation>
    <location>
        <position position="457"/>
    </location>
</feature>
<dbReference type="EMBL" id="V01491">
    <property type="protein sequence ID" value="CAA24735.1"/>
    <property type="molecule type" value="mRNA"/>
</dbReference>
<dbReference type="EMBL" id="V00426">
    <property type="protein sequence ID" value="CAA23709.1"/>
    <property type="molecule type" value="mRNA"/>
</dbReference>
<dbReference type="EMBL" id="BC105499">
    <property type="protein sequence ID" value="AAI05500.1"/>
    <property type="molecule type" value="mRNA"/>
</dbReference>
<dbReference type="PIR" id="A01281">
    <property type="entry name" value="KGBOH1"/>
</dbReference>
<dbReference type="PIR" id="A01283">
    <property type="entry name" value="KGBOL1"/>
</dbReference>
<dbReference type="RefSeq" id="NP_786968.2">
    <property type="nucleotide sequence ID" value="NM_175774.3"/>
</dbReference>
<dbReference type="SMR" id="P01044"/>
<dbReference type="FunCoup" id="P01044">
    <property type="interactions" value="130"/>
</dbReference>
<dbReference type="STRING" id="9913.ENSBTAP00000048995"/>
<dbReference type="MEROPS" id="I25.016"/>
<dbReference type="MEROPS" id="I25.017"/>
<dbReference type="MEROPS" id="I25.950"/>
<dbReference type="GlyConnect" id="785">
    <property type="glycosylation" value="1 O-Linked glycan (2 sites)"/>
</dbReference>
<dbReference type="GlyCosmos" id="P01044">
    <property type="glycosylation" value="19 sites, 1 glycan"/>
</dbReference>
<dbReference type="GlyGen" id="P01044">
    <property type="glycosylation" value="19 sites, 1 O-linked glycan (2 sites)"/>
</dbReference>
<dbReference type="iPTMnet" id="P01044"/>
<dbReference type="PaxDb" id="9913-ENSBTAP00000048995"/>
<dbReference type="PeptideAtlas" id="P01044"/>
<dbReference type="GeneID" id="280833"/>
<dbReference type="CTD" id="3827"/>
<dbReference type="eggNOG" id="ENOG502RYAC">
    <property type="taxonomic scope" value="Eukaryota"/>
</dbReference>
<dbReference type="HOGENOM" id="CLU_029531_0_0_1"/>
<dbReference type="InParanoid" id="P01044"/>
<dbReference type="OrthoDB" id="9937817at2759"/>
<dbReference type="TreeFam" id="TF351852"/>
<dbReference type="Proteomes" id="UP000009136">
    <property type="component" value="Unplaced"/>
</dbReference>
<dbReference type="GO" id="GO:0005576">
    <property type="term" value="C:extracellular region"/>
    <property type="evidence" value="ECO:0000318"/>
    <property type="project" value="GO_Central"/>
</dbReference>
<dbReference type="GO" id="GO:0004869">
    <property type="term" value="F:cysteine-type endopeptidase inhibitor activity"/>
    <property type="evidence" value="ECO:0000318"/>
    <property type="project" value="GO_Central"/>
</dbReference>
<dbReference type="GO" id="GO:0007596">
    <property type="term" value="P:blood coagulation"/>
    <property type="evidence" value="ECO:0007669"/>
    <property type="project" value="UniProtKB-KW"/>
</dbReference>
<dbReference type="GO" id="GO:0006954">
    <property type="term" value="P:inflammatory response"/>
    <property type="evidence" value="ECO:0007669"/>
    <property type="project" value="UniProtKB-KW"/>
</dbReference>
<dbReference type="GO" id="GO:0030195">
    <property type="term" value="P:negative regulation of blood coagulation"/>
    <property type="evidence" value="ECO:0000318"/>
    <property type="project" value="GO_Central"/>
</dbReference>
<dbReference type="GO" id="GO:0007162">
    <property type="term" value="P:negative regulation of cell adhesion"/>
    <property type="evidence" value="ECO:0000318"/>
    <property type="project" value="GO_Central"/>
</dbReference>
<dbReference type="GO" id="GO:0042311">
    <property type="term" value="P:vasodilation"/>
    <property type="evidence" value="ECO:0007669"/>
    <property type="project" value="UniProtKB-KW"/>
</dbReference>
<dbReference type="CDD" id="cd00042">
    <property type="entry name" value="CY"/>
    <property type="match status" value="3"/>
</dbReference>
<dbReference type="FunFam" id="3.10.450.10:FF:000002">
    <property type="entry name" value="Kininogen 1"/>
    <property type="match status" value="2"/>
</dbReference>
<dbReference type="FunFam" id="3.10.450.10:FF:000008">
    <property type="entry name" value="Kininogen 1"/>
    <property type="match status" value="1"/>
</dbReference>
<dbReference type="Gene3D" id="3.10.450.10">
    <property type="match status" value="3"/>
</dbReference>
<dbReference type="InterPro" id="IPR000010">
    <property type="entry name" value="Cystatin_dom"/>
</dbReference>
<dbReference type="InterPro" id="IPR046350">
    <property type="entry name" value="Cystatin_sf"/>
</dbReference>
<dbReference type="InterPro" id="IPR002395">
    <property type="entry name" value="Kininogen"/>
</dbReference>
<dbReference type="InterPro" id="IPR027358">
    <property type="entry name" value="Kininogen-type_cystatin_dom"/>
</dbReference>
<dbReference type="InterPro" id="IPR050735">
    <property type="entry name" value="Kininogen_Fetuin_HRG"/>
</dbReference>
<dbReference type="InterPro" id="IPR018073">
    <property type="entry name" value="Prot_inh_cystat_CS"/>
</dbReference>
<dbReference type="PANTHER" id="PTHR13814">
    <property type="entry name" value="FETUIN"/>
    <property type="match status" value="1"/>
</dbReference>
<dbReference type="PANTHER" id="PTHR13814:SF12">
    <property type="entry name" value="KININOGEN-1"/>
    <property type="match status" value="1"/>
</dbReference>
<dbReference type="Pfam" id="PF00031">
    <property type="entry name" value="Cystatin"/>
    <property type="match status" value="3"/>
</dbReference>
<dbReference type="PRINTS" id="PR00334">
    <property type="entry name" value="KININOGEN"/>
</dbReference>
<dbReference type="SMART" id="SM00043">
    <property type="entry name" value="CY"/>
    <property type="match status" value="3"/>
</dbReference>
<dbReference type="SUPFAM" id="SSF54403">
    <property type="entry name" value="Cystatin/monellin"/>
    <property type="match status" value="3"/>
</dbReference>
<dbReference type="PROSITE" id="PS00287">
    <property type="entry name" value="CYSTATIN"/>
    <property type="match status" value="2"/>
</dbReference>
<dbReference type="PROSITE" id="PS51647">
    <property type="entry name" value="CYSTATIN_KININOGEN"/>
    <property type="match status" value="3"/>
</dbReference>
<gene>
    <name type="primary">KNG1</name>
</gene>
<proteinExistence type="evidence at protein level"/>
<comment type="function">
    <text>Kininogens are inhibitors of thiol proteases. HMW-kininogen plays an important role in blood coagulation by helping to position optimally prekallikrein and factor XI next to factor XII; HMW-kininogen inhibits the thrombin- and plasmin-induced aggregation of thrombocytes. LMW-kininogen inhibits the aggregation of thrombocytes. LMW-kininogen is in contrast to HMW-kininogen not involved in blood clotting.</text>
</comment>
<comment type="function">
    <molecule>Bradykinin</molecule>
    <text evidence="1">The active peptide bradykinin is a potent vasodilatator that is released from HMW-kininogen shows a variety of physiological effects: (A) influence in smooth muscle contraction, (B) induction of hypotension, (C) natriuresis and diuresis, (D) decrease in blood glucose level, (E) it is a mediator of inflammation and causes (E1) increase in vascular permeability, (E2) stimulation of nociceptors (4E3) release of other mediators of inflammation (e.g. prostaglandins), (F) it has a cardioprotective effect (directly via bradykinin action, indirectly via endothelium-derived relaxing factor action).</text>
</comment>
<comment type="subcellular location">
    <subcellularLocation>
        <location>Secreted</location>
        <location>Extracellular space</location>
    </subcellularLocation>
</comment>
<comment type="alternative products">
    <event type="alternative splicing"/>
    <isoform>
        <id>P01044-1</id>
        <name>HMW</name>
        <sequence type="displayed"/>
    </isoform>
    <isoform>
        <id>P01044-2</id>
        <name>LMW</name>
        <sequence type="described" ref="VSP_013562 VSP_013563"/>
    </isoform>
</comment>
<comment type="tissue specificity">
    <text>Plasma.</text>
</comment>
<comment type="PTM">
    <text>Bradykinin is released from kininogen by plasma kallikrein.</text>
</comment>
<comment type="PTM">
    <text evidence="1">Phosphorylated by FAM20C in the extracellular medium.</text>
</comment>
<comment type="PTM">
    <molecule>Bradykinin</molecule>
    <text evidence="1">Bradykinin is inactivated by ACE, which removes the dipeptide Arg-Phe from its C-terminus.</text>
</comment>
<reference key="1">
    <citation type="journal article" date="1983" name="Nature">
        <title>A single gene for bovine high molecular weight and low molecular weight kininogens.</title>
        <authorList>
            <person name="Kitamura N."/>
            <person name="Takagaki Y."/>
            <person name="Furuto S."/>
            <person name="Tanaka T."/>
            <person name="Nawa H."/>
            <person name="Nakanishi S."/>
        </authorList>
    </citation>
    <scope>NUCLEOTIDE SEQUENCE [MRNA] (ISOFORM HMW)</scope>
</reference>
<reference key="2">
    <citation type="journal article" date="1983" name="Proc. Natl. Acad. Sci. U.S.A.">
        <title>Primary structures of bovine liver low molecular weight kininogen precursors and their two mRNAs.</title>
        <authorList>
            <person name="Nawa H."/>
            <person name="Kitamura N."/>
            <person name="Hirose T."/>
            <person name="Asai M."/>
            <person name="Inayama S."/>
            <person name="Nakanishi S."/>
        </authorList>
    </citation>
    <scope>NUCLEOTIDE SEQUENCE [MRNA] (ISOFORM LMW)</scope>
</reference>
<reference key="3">
    <citation type="submission" date="2005-09" db="EMBL/GenBank/DDBJ databases">
        <authorList>
            <consortium name="NIH - Mammalian Gene Collection (MGC) project"/>
        </authorList>
    </citation>
    <scope>NUCLEOTIDE SEQUENCE [LARGE SCALE MRNA] (ISOFORM HMW)</scope>
    <source>
        <strain>Hereford</strain>
        <tissue>Fetal liver</tissue>
    </source>
</reference>
<reference key="4">
    <citation type="journal article" date="1987" name="J. Biol. Chem.">
        <title>Bovine high molecular weight kininogen. The amino acid sequence, positions of carbohydrate chains and disulfide bridges in the heavy chain portion.</title>
        <authorList>
            <person name="Sueyoshi T."/>
            <person name="Miyata T."/>
            <person name="Hashimoto N."/>
            <person name="Kato H."/>
            <person name="Hayashida H."/>
            <person name="Miyata T."/>
            <person name="Iwanaga S."/>
        </authorList>
    </citation>
    <scope>PROTEIN SEQUENCE OF 19-378</scope>
    <scope>GLYCOSYLATION AT ASN-87; THR-136; ASN-168; ASN-169; ASN-197 AND ASN-204</scope>
</reference>
<reference key="5">
    <citation type="journal article" date="1970" name="J. Biochem.">
        <title>Studies on the structure of bovine kininogen: cleavages of disulfide bonds and of methionyl bonds in kininogen-II.</title>
        <authorList>
            <person name="Kato H."/>
            <person name="Nagasawa S."/>
            <person name="Suzuki T."/>
        </authorList>
    </citation>
    <scope>PROTEIN SEQUENCE OF 378-393</scope>
</reference>
<reference key="6">
    <citation type="journal article" date="1975" name="J. Biochem.">
        <title>Studies on the primary structure of bovine high-molecular-weight kininogen. Amino acid sequence of a fragment ('histidine-rich peptide') released by plasma kallikrein.</title>
        <authorList>
            <person name="Han Y.N."/>
            <person name="Komiya M."/>
            <person name="Iwanaga S."/>
            <person name="Suzuki T."/>
        </authorList>
    </citation>
    <scope>PROTEIN SEQUENCE OF 458-498</scope>
</reference>
<reference key="7">
    <citation type="journal article" date="2009" name="Mol. Cell. Proteomics">
        <title>Affinity enrichment and characterization of mucin core-1 type glycopeptides from bovine serum.</title>
        <authorList>
            <person name="Darula Z."/>
            <person name="Medzihradszky K.F."/>
        </authorList>
    </citation>
    <scope>GLYCOSYLATION AT THR-136 AND SER-581</scope>
    <scope>IDENTIFICATION BY MASS SPECTROMETRY</scope>
</reference>
<sequence>MKLITILFLCSRLLPSLTQESSQEIDCNDQDVFKAVDAALTKYNSENKSGNQFVLYRITEVARMDNPDTFYSLKYQIKEGDCPFQSNKTWQDCDYKDSAQAATGECTATVAKRGNMKFSVAIQTCLITPAEGPVVTAQYECLGCVHPISTKSPDLEPVLRYAIQYFNNNTSHSHLFDLKEVKRAQRQVVSGWNYEVNYSIAQTNCSKEEFSFLTPDCKSLSSGDTGECTDKAHVDVKLRISSFSQKCDLYPVKDFVQPPTRLCAGCPKPIPVDSPDLEEPLSHSIAKLNAEHDGAFYFKIDTVKKATVQVVAGLKYSIVFIARETTCSKGSNEELTKSCEINIHGQILHCDANVYVVPWEEKVYPTVNCQPLGQTSLMKRPPGFSPFRSVQVMKTEGSTTVSLPHSAMSPVQDEERDSGKEQGPTHGHGWDHGKQIKLHGLGLGHKHKHDQGHGHHGSHGLGHGHQKQHGLGHGHKHGHGHGKHKNKGKNNGKHYDWRTPYLASSYEDSTTSSAQTQEKTEETTLSSLAQPGVAITFPDFQDSDLIATVMPNTLPPHTESDDDWIPDIQTEPNSLAFKLISDFPETTSPKCPSRPWKPVNGVNPTVEMKESHDFDLVDALL</sequence>